<name>IL6_BUBCA</name>
<accession>Q2MH06</accession>
<evidence type="ECO:0000250" key="1"/>
<evidence type="ECO:0000250" key="2">
    <source>
        <dbReference type="UniProtKB" id="P05231"/>
    </source>
</evidence>
<evidence type="ECO:0000250" key="3">
    <source>
        <dbReference type="UniProtKB" id="P08505"/>
    </source>
</evidence>
<evidence type="ECO:0000255" key="4"/>
<evidence type="ECO:0000305" key="5"/>
<sequence length="208" mass="23773">MNSRFTSAFTPFAVSLGLLLVMTSAFPTPGPLGEDFKNDTTPGRLLLTTPEKTEALIKRMVDKISAMRKEICEKNDECESSKDTLAENKLNLPKMEEKDGCFQSGFNQAICLIRTTAGLLEYQIYLDYLQNEYEGNRENVRDLRKNIRTLIQILKQKIADLITTPATNTDLLEKMQSSNEWVKNAKIILILRNLENFLQFSLRAIRMK</sequence>
<proteinExistence type="evidence at transcript level"/>
<gene>
    <name type="primary">IL6</name>
</gene>
<protein>
    <recommendedName>
        <fullName>Interleukin-6</fullName>
        <shortName>IL-6</shortName>
    </recommendedName>
</protein>
<reference key="1">
    <citation type="journal article" date="2007" name="Comp. Immunol. Microbiol. Infect. Dis.">
        <title>Molecular cloning, sequencing and phylogenetic analysis of inflammatory cytokines of swamp type buffalo contrasting with other bubaline breeds.</title>
        <authorList>
            <person name="Mingala C.N."/>
            <person name="Odbileg R."/>
            <person name="Konnai S."/>
            <person name="Ohashi K."/>
            <person name="Onuma M."/>
        </authorList>
    </citation>
    <scope>NUCLEOTIDE SEQUENCE [MRNA]</scope>
</reference>
<comment type="function">
    <text evidence="2">Cytokine with a wide variety of biological functions in immunity, tissue regeneration, and metabolism. Binds to IL6R, then the complex associates to the signaling subunit IL6ST/gp130 to trigger the intracellular IL6-signaling pathway. The interaction with the membrane-bound IL6R and IL6ST stimulates 'classic signaling', whereas the binding of IL6 and soluble IL6R to IL6ST stimulates 'trans-signaling'. Alternatively, 'cluster signaling' occurs when membrane-bound IL6:IL6R complexes on transmitter cells activate IL6ST receptors on neighboring receiver cells.</text>
</comment>
<comment type="function">
    <text evidence="2 3">IL6 is a potent inducer of the acute phase response. Rapid production of IL6 contributes to host defense during infection and tissue injury, but excessive IL6 synthesis is involved in disease pathology. In the innate immune response, is synthesized by myeloid cells, such as macrophages and dendritic cells, upon recognition of pathogens through toll-like receptors (TLRs) at the site of infection or tissue injury (By similarity). In the adaptive immune response, is required for the differentiation of B cells into immunoglobulin-secreting cells. Plays a major role in the differentiation of CD4(+) T cell subsets. Essential factor for the development of T follicular helper (Tfh) cells that are required for the induction of germinal-center formation. Required to drive naive CD4(+) T cells to the Th17 lineage. Also required for proliferation of myeloma cells and the survival of plasmablast cells (By similarity).</text>
</comment>
<comment type="function">
    <text evidence="2 3">Acts as an essential factor in bone homeostasis and on vessels directly or indirectly by induction of VEGF, resulting in increased angiogenesis activity and vascular permeability. Induces, through 'trans-signaling' and synergistically with IL1B and TNF, the production of VEGF. Involved in metabolic controls, is discharged into the bloodstream after muscle contraction increasing lipolysis and improving insulin resistance (By similarity). 'Trans-signaling' in central nervous system also regulates energy and glucose homeostasis. Mediates, through GLP-1, crosstalk between insulin-sensitive tissues, intestinal L cells and pancreatic islets to adapt to changes in insulin demand (By similarity). Also acts as a myokine (By similarity). Plays a protective role during liver injury, being required for maintenance of tissue regeneration (By similarity). Also has a pivotal role in iron metabolism by regulating HAMP/hepcidin expression upon inflammation or bacterial infection (By similarity). Through activation of IL6ST-YAP-NOTCH pathway, induces inflammation-induced epithelial regeneration (By similarity).</text>
</comment>
<comment type="subunit">
    <text evidence="2">Component of a hexamer of two molecules each of IL6, IL6R and IL6ST; first binds to IL6R to associate with the signaling subunit IL6ST. Interacts with IL6R (via the N-terminal ectodomain); this interaction may be affected by IL6R-binding with SORL1, hence decreasing IL6 cis signaling. Interacts with SORL1 (via the N-terminal ectodomain); this interaction leads to IL6 internalization and lysosomal degradation. May form a trimeric complex with the soluble SORL1 ectodomain and soluble IL6R receptor; this interaction might stabilize circulating IL6, hence promoting IL6 trans signaling.</text>
</comment>
<comment type="subcellular location">
    <subcellularLocation>
        <location evidence="2">Secreted</location>
    </subcellularLocation>
</comment>
<comment type="similarity">
    <text evidence="5">Belongs to the IL-6 superfamily.</text>
</comment>
<feature type="signal peptide" evidence="1">
    <location>
        <begin position="1"/>
        <end position="29"/>
    </location>
</feature>
<feature type="chain" id="PRO_0000254891" description="Interleukin-6">
    <location>
        <begin position="30"/>
        <end position="208"/>
    </location>
</feature>
<feature type="modified residue" description="Phosphoserine" evidence="2">
    <location>
        <position position="81"/>
    </location>
</feature>
<feature type="glycosylation site" description="N-linked (GlcNAc...) asparagine" evidence="4">
    <location>
        <position position="38"/>
    </location>
</feature>
<feature type="disulfide bond" evidence="1">
    <location>
        <begin position="72"/>
        <end position="78"/>
    </location>
</feature>
<feature type="disulfide bond" evidence="1">
    <location>
        <begin position="101"/>
        <end position="111"/>
    </location>
</feature>
<dbReference type="EMBL" id="AB246784">
    <property type="protein sequence ID" value="BAE76006.1"/>
    <property type="molecule type" value="mRNA"/>
</dbReference>
<dbReference type="SMR" id="Q2MH06"/>
<dbReference type="GlyCosmos" id="Q2MH06">
    <property type="glycosylation" value="1 site, No reported glycans"/>
</dbReference>
<dbReference type="GO" id="GO:0005615">
    <property type="term" value="C:extracellular space"/>
    <property type="evidence" value="ECO:0007669"/>
    <property type="project" value="UniProtKB-KW"/>
</dbReference>
<dbReference type="GO" id="GO:0005896">
    <property type="term" value="C:interleukin-6 receptor complex"/>
    <property type="evidence" value="ECO:0007669"/>
    <property type="project" value="TreeGrafter"/>
</dbReference>
<dbReference type="GO" id="GO:0005125">
    <property type="term" value="F:cytokine activity"/>
    <property type="evidence" value="ECO:0007669"/>
    <property type="project" value="UniProtKB-KW"/>
</dbReference>
<dbReference type="GO" id="GO:0008083">
    <property type="term" value="F:growth factor activity"/>
    <property type="evidence" value="ECO:0007669"/>
    <property type="project" value="UniProtKB-KW"/>
</dbReference>
<dbReference type="GO" id="GO:0005138">
    <property type="term" value="F:interleukin-6 receptor binding"/>
    <property type="evidence" value="ECO:0007669"/>
    <property type="project" value="InterPro"/>
</dbReference>
<dbReference type="GO" id="GO:0006953">
    <property type="term" value="P:acute-phase response"/>
    <property type="evidence" value="ECO:0007669"/>
    <property type="project" value="UniProtKB-KW"/>
</dbReference>
<dbReference type="GO" id="GO:0042593">
    <property type="term" value="P:glucose homeostasis"/>
    <property type="evidence" value="ECO:0000250"/>
    <property type="project" value="UniProtKB"/>
</dbReference>
<dbReference type="GO" id="GO:0072574">
    <property type="term" value="P:hepatocyte proliferation"/>
    <property type="evidence" value="ECO:0000250"/>
    <property type="project" value="UniProtKB"/>
</dbReference>
<dbReference type="GO" id="GO:0070102">
    <property type="term" value="P:interleukin-6-mediated signaling pathway"/>
    <property type="evidence" value="ECO:0000250"/>
    <property type="project" value="UniProtKB"/>
</dbReference>
<dbReference type="GO" id="GO:0097421">
    <property type="term" value="P:liver regeneration"/>
    <property type="evidence" value="ECO:0000250"/>
    <property type="project" value="UniProtKB"/>
</dbReference>
<dbReference type="GO" id="GO:0009891">
    <property type="term" value="P:positive regulation of biosynthetic process"/>
    <property type="evidence" value="ECO:0007669"/>
    <property type="project" value="UniProtKB-ARBA"/>
</dbReference>
<dbReference type="GO" id="GO:0051240">
    <property type="term" value="P:positive regulation of multicellular organismal process"/>
    <property type="evidence" value="ECO:0007669"/>
    <property type="project" value="UniProtKB-ARBA"/>
</dbReference>
<dbReference type="GO" id="GO:0046427">
    <property type="term" value="P:positive regulation of receptor signaling pathway via JAK-STAT"/>
    <property type="evidence" value="ECO:0007669"/>
    <property type="project" value="TreeGrafter"/>
</dbReference>
<dbReference type="GO" id="GO:1904894">
    <property type="term" value="P:positive regulation of receptor signaling pathway via STAT"/>
    <property type="evidence" value="ECO:0000250"/>
    <property type="project" value="UniProtKB"/>
</dbReference>
<dbReference type="GO" id="GO:0070092">
    <property type="term" value="P:regulation of glucagon secretion"/>
    <property type="evidence" value="ECO:0000250"/>
    <property type="project" value="UniProtKB"/>
</dbReference>
<dbReference type="GO" id="GO:0050796">
    <property type="term" value="P:regulation of insulin secretion"/>
    <property type="evidence" value="ECO:0000250"/>
    <property type="project" value="UniProtKB"/>
</dbReference>
<dbReference type="GO" id="GO:0014823">
    <property type="term" value="P:response to activity"/>
    <property type="evidence" value="ECO:0000250"/>
    <property type="project" value="UniProtKB"/>
</dbReference>
<dbReference type="GO" id="GO:0072540">
    <property type="term" value="P:T-helper 17 cell lineage commitment"/>
    <property type="evidence" value="ECO:0000250"/>
    <property type="project" value="UniProtKB"/>
</dbReference>
<dbReference type="GO" id="GO:0010573">
    <property type="term" value="P:vascular endothelial growth factor production"/>
    <property type="evidence" value="ECO:0000250"/>
    <property type="project" value="UniProtKB"/>
</dbReference>
<dbReference type="FunFam" id="1.20.1250.10:FF:000006">
    <property type="entry name" value="Interleukin-6"/>
    <property type="match status" value="1"/>
</dbReference>
<dbReference type="Gene3D" id="1.20.1250.10">
    <property type="match status" value="1"/>
</dbReference>
<dbReference type="InterPro" id="IPR009079">
    <property type="entry name" value="4_helix_cytokine-like_core"/>
</dbReference>
<dbReference type="InterPro" id="IPR003574">
    <property type="entry name" value="IL-6-like"/>
</dbReference>
<dbReference type="InterPro" id="IPR030474">
    <property type="entry name" value="IL-6/GCSF/MGF"/>
</dbReference>
<dbReference type="InterPro" id="IPR030473">
    <property type="entry name" value="IL6/GCSF/MGF_CS"/>
</dbReference>
<dbReference type="PANTHER" id="PTHR48494">
    <property type="entry name" value="INTERLEUKIN-6"/>
    <property type="match status" value="1"/>
</dbReference>
<dbReference type="PANTHER" id="PTHR48494:SF1">
    <property type="entry name" value="INTERLEUKIN-6"/>
    <property type="match status" value="1"/>
</dbReference>
<dbReference type="Pfam" id="PF00489">
    <property type="entry name" value="IL6"/>
    <property type="match status" value="1"/>
</dbReference>
<dbReference type="PIRSF" id="PIRSF001935">
    <property type="entry name" value="IL6_MGF_GCSF"/>
    <property type="match status" value="1"/>
</dbReference>
<dbReference type="PRINTS" id="PR00433">
    <property type="entry name" value="IL6GCSFMGF"/>
</dbReference>
<dbReference type="PRINTS" id="PR00434">
    <property type="entry name" value="INTERLEUKIN6"/>
</dbReference>
<dbReference type="SMART" id="SM00126">
    <property type="entry name" value="IL6"/>
    <property type="match status" value="1"/>
</dbReference>
<dbReference type="SUPFAM" id="SSF47266">
    <property type="entry name" value="4-helical cytokines"/>
    <property type="match status" value="1"/>
</dbReference>
<dbReference type="PROSITE" id="PS00254">
    <property type="entry name" value="INTERLEUKIN_6"/>
    <property type="match status" value="1"/>
</dbReference>
<organism>
    <name type="scientific">Bubalus carabanensis</name>
    <name type="common">Swamp type water buffalo</name>
    <name type="synonym">Bubalus bubalis carabanensis</name>
    <dbReference type="NCBI Taxonomy" id="3119969"/>
    <lineage>
        <taxon>Eukaryota</taxon>
        <taxon>Metazoa</taxon>
        <taxon>Chordata</taxon>
        <taxon>Craniata</taxon>
        <taxon>Vertebrata</taxon>
        <taxon>Euteleostomi</taxon>
        <taxon>Mammalia</taxon>
        <taxon>Eutheria</taxon>
        <taxon>Laurasiatheria</taxon>
        <taxon>Artiodactyla</taxon>
        <taxon>Ruminantia</taxon>
        <taxon>Pecora</taxon>
        <taxon>Bovidae</taxon>
        <taxon>Bovinae</taxon>
        <taxon>Bubalus</taxon>
    </lineage>
</organism>
<keyword id="KW-0011">Acute phase</keyword>
<keyword id="KW-0202">Cytokine</keyword>
<keyword id="KW-1015">Disulfide bond</keyword>
<keyword id="KW-0325">Glycoprotein</keyword>
<keyword id="KW-0339">Growth factor</keyword>
<keyword id="KW-0597">Phosphoprotein</keyword>
<keyword id="KW-0964">Secreted</keyword>
<keyword id="KW-0732">Signal</keyword>